<protein>
    <recommendedName>
        <fullName>Adenylate kinase</fullName>
        <shortName>AK</shortName>
        <ecNumber>2.7.4.3</ecNumber>
    </recommendedName>
    <alternativeName>
        <fullName>ATP-AMP transphosphorylase</fullName>
    </alternativeName>
</protein>
<sequence>MKIVIVALPGSGKTTILNFVKQKLPDVKIVNYGDVMLEIAKKRFGIQHRDEMRKKIPVDEYRKVQEEAAEYIASLTGDVIIDTHASIKIGGGYYPGLPDRIISKLKPDVILLLEYDPKVILERRKKDPDRFRDLESEEEIEMHQQANRYYAFAAANAGESTVHVLNFRGKPESRPFEHAEVAAEYIVNLILRTRQKS</sequence>
<dbReference type="EC" id="2.7.4.3"/>
<dbReference type="EMBL" id="AE009441">
    <property type="protein sequence ID" value="AAL63653.1"/>
    <property type="molecule type" value="Genomic_DNA"/>
</dbReference>
<dbReference type="RefSeq" id="WP_011008126.1">
    <property type="nucleotide sequence ID" value="NC_003364.1"/>
</dbReference>
<dbReference type="SMR" id="Q8ZWP7"/>
<dbReference type="FunCoup" id="Q8ZWP7">
    <property type="interactions" value="80"/>
</dbReference>
<dbReference type="STRING" id="178306.PAE1681"/>
<dbReference type="EnsemblBacteria" id="AAL63653">
    <property type="protein sequence ID" value="AAL63653"/>
    <property type="gene ID" value="PAE1681"/>
</dbReference>
<dbReference type="GeneID" id="1465902"/>
<dbReference type="KEGG" id="pai:PAE1681"/>
<dbReference type="PATRIC" id="fig|178306.9.peg.1245"/>
<dbReference type="eggNOG" id="arCOG01039">
    <property type="taxonomic scope" value="Archaea"/>
</dbReference>
<dbReference type="HOGENOM" id="CLU_119371_0_0_2"/>
<dbReference type="InParanoid" id="Q8ZWP7"/>
<dbReference type="Proteomes" id="UP000002439">
    <property type="component" value="Chromosome"/>
</dbReference>
<dbReference type="GO" id="GO:0005737">
    <property type="term" value="C:cytoplasm"/>
    <property type="evidence" value="ECO:0007669"/>
    <property type="project" value="UniProtKB-SubCell"/>
</dbReference>
<dbReference type="GO" id="GO:0004017">
    <property type="term" value="F:adenylate kinase activity"/>
    <property type="evidence" value="ECO:0007669"/>
    <property type="project" value="UniProtKB-UniRule"/>
</dbReference>
<dbReference type="GO" id="GO:0005524">
    <property type="term" value="F:ATP binding"/>
    <property type="evidence" value="ECO:0007669"/>
    <property type="project" value="UniProtKB-UniRule"/>
</dbReference>
<dbReference type="Gene3D" id="3.40.50.300">
    <property type="entry name" value="P-loop containing nucleotide triphosphate hydrolases"/>
    <property type="match status" value="1"/>
</dbReference>
<dbReference type="HAMAP" id="MF_00234">
    <property type="entry name" value="Adenylate_kinase_AdkA"/>
    <property type="match status" value="1"/>
</dbReference>
<dbReference type="InterPro" id="IPR023477">
    <property type="entry name" value="Adenylate_kinase_AdkA"/>
</dbReference>
<dbReference type="InterPro" id="IPR027417">
    <property type="entry name" value="P-loop_NTPase"/>
</dbReference>
<dbReference type="NCBIfam" id="NF003122">
    <property type="entry name" value="PRK04040.1"/>
    <property type="match status" value="1"/>
</dbReference>
<dbReference type="Pfam" id="PF13207">
    <property type="entry name" value="AAA_17"/>
    <property type="match status" value="1"/>
</dbReference>
<dbReference type="SUPFAM" id="SSF52540">
    <property type="entry name" value="P-loop containing nucleoside triphosphate hydrolases"/>
    <property type="match status" value="1"/>
</dbReference>
<accession>Q8ZWP7</accession>
<gene>
    <name type="primary">adkA</name>
    <name type="ordered locus">PAE1681</name>
</gene>
<organism>
    <name type="scientific">Pyrobaculum aerophilum (strain ATCC 51768 / DSM 7523 / JCM 9630 / CIP 104966 / NBRC 100827 / IM2)</name>
    <dbReference type="NCBI Taxonomy" id="178306"/>
    <lineage>
        <taxon>Archaea</taxon>
        <taxon>Thermoproteota</taxon>
        <taxon>Thermoprotei</taxon>
        <taxon>Thermoproteales</taxon>
        <taxon>Thermoproteaceae</taxon>
        <taxon>Pyrobaculum</taxon>
    </lineage>
</organism>
<keyword id="KW-0067">ATP-binding</keyword>
<keyword id="KW-0963">Cytoplasm</keyword>
<keyword id="KW-0418">Kinase</keyword>
<keyword id="KW-0547">Nucleotide-binding</keyword>
<keyword id="KW-1185">Reference proteome</keyword>
<keyword id="KW-0808">Transferase</keyword>
<name>KADA_PYRAE</name>
<evidence type="ECO:0000250" key="1"/>
<evidence type="ECO:0000305" key="2"/>
<feature type="chain" id="PRO_0000131821" description="Adenylate kinase">
    <location>
        <begin position="1"/>
        <end position="197"/>
    </location>
</feature>
<feature type="binding site" evidence="1">
    <location>
        <begin position="7"/>
        <end position="15"/>
    </location>
    <ligand>
        <name>ATP</name>
        <dbReference type="ChEBI" id="CHEBI:30616"/>
    </ligand>
</feature>
<reference key="1">
    <citation type="journal article" date="2002" name="Proc. Natl. Acad. Sci. U.S.A.">
        <title>Genome sequence of the hyperthermophilic crenarchaeon Pyrobaculum aerophilum.</title>
        <authorList>
            <person name="Fitz-Gibbon S.T."/>
            <person name="Ladner H."/>
            <person name="Kim U.-J."/>
            <person name="Stetter K.O."/>
            <person name="Simon M.I."/>
            <person name="Miller J.H."/>
        </authorList>
    </citation>
    <scope>NUCLEOTIDE SEQUENCE [LARGE SCALE GENOMIC DNA]</scope>
    <source>
        <strain>ATCC 51768 / DSM 7523 / JCM 9630 / CIP 104966 / NBRC 100827 / IM2</strain>
    </source>
</reference>
<proteinExistence type="inferred from homology"/>
<comment type="catalytic activity">
    <reaction>
        <text>AMP + ATP = 2 ADP</text>
        <dbReference type="Rhea" id="RHEA:12973"/>
        <dbReference type="ChEBI" id="CHEBI:30616"/>
        <dbReference type="ChEBI" id="CHEBI:456215"/>
        <dbReference type="ChEBI" id="CHEBI:456216"/>
        <dbReference type="EC" id="2.7.4.3"/>
    </reaction>
</comment>
<comment type="subcellular location">
    <subcellularLocation>
        <location evidence="1">Cytoplasm</location>
    </subcellularLocation>
</comment>
<comment type="similarity">
    <text evidence="2">Belongs to the archaeal adenylate kinase family.</text>
</comment>